<protein>
    <recommendedName>
        <fullName evidence="2">NAD(P)H-quinone oxidoreductase subunit L, organellar chromatophore</fullName>
        <ecNumber evidence="2">7.1.1.-</ecNumber>
    </recommendedName>
    <alternativeName>
        <fullName evidence="2">NAD(P)H dehydrogenase I subunit L</fullName>
    </alternativeName>
    <alternativeName>
        <fullName>NDH-1 subunit L</fullName>
    </alternativeName>
    <alternativeName>
        <fullName>NDH-L</fullName>
    </alternativeName>
</protein>
<gene>
    <name evidence="2" type="primary">ndhL</name>
    <name type="ordered locus">PCC_0007</name>
</gene>
<comment type="function">
    <text evidence="1">NDH-1 shuttles electrons from an unknown electron donor, via FMN and iron-sulfur (Fe-S) centers, to quinones in the respiratory and/or the photosynthetic chain. The immediate electron acceptor for the enzyme in this species is believed to be plastoquinone. Couples the redox reaction to proton translocation, and thus conserves the redox energy in a proton gradient (By similarity).</text>
</comment>
<comment type="catalytic activity">
    <reaction evidence="2">
        <text>a plastoquinone + NADH + (n+1) H(+)(in) = a plastoquinol + NAD(+) + n H(+)(out)</text>
        <dbReference type="Rhea" id="RHEA:42608"/>
        <dbReference type="Rhea" id="RHEA-COMP:9561"/>
        <dbReference type="Rhea" id="RHEA-COMP:9562"/>
        <dbReference type="ChEBI" id="CHEBI:15378"/>
        <dbReference type="ChEBI" id="CHEBI:17757"/>
        <dbReference type="ChEBI" id="CHEBI:57540"/>
        <dbReference type="ChEBI" id="CHEBI:57945"/>
        <dbReference type="ChEBI" id="CHEBI:62192"/>
    </reaction>
</comment>
<comment type="catalytic activity">
    <reaction evidence="2">
        <text>a plastoquinone + NADPH + (n+1) H(+)(in) = a plastoquinol + NADP(+) + n H(+)(out)</text>
        <dbReference type="Rhea" id="RHEA:42612"/>
        <dbReference type="Rhea" id="RHEA-COMP:9561"/>
        <dbReference type="Rhea" id="RHEA-COMP:9562"/>
        <dbReference type="ChEBI" id="CHEBI:15378"/>
        <dbReference type="ChEBI" id="CHEBI:17757"/>
        <dbReference type="ChEBI" id="CHEBI:57783"/>
        <dbReference type="ChEBI" id="CHEBI:58349"/>
        <dbReference type="ChEBI" id="CHEBI:62192"/>
    </reaction>
</comment>
<comment type="subunit">
    <text evidence="2">NDH-1 can be composed of about 15 different subunits; different subcomplexes with different compositions have been identified which probably have different functions.</text>
</comment>
<comment type="subcellular location">
    <subcellularLocation>
        <location evidence="1">Plastid</location>
        <location evidence="1">Organellar chromatophore thylakoid membrane</location>
        <topology evidence="2">Multi-pass membrane protein</topology>
    </subcellularLocation>
</comment>
<comment type="similarity">
    <text evidence="2">Belongs to the complex I NdhL subunit family.</text>
</comment>
<reference key="1">
    <citation type="journal article" date="2008" name="Curr. Biol.">
        <title>Chromatophore genome sequence of Paulinella sheds light on acquisition of photosynthesis by eukaryotes.</title>
        <authorList>
            <person name="Nowack E.C.M."/>
            <person name="Melkonian M."/>
            <person name="Gloeckner G."/>
        </authorList>
    </citation>
    <scope>NUCLEOTIDE SEQUENCE [LARGE SCALE GENOMIC DNA]</scope>
</reference>
<proteinExistence type="inferred from homology"/>
<name>NDHL_PAUCH</name>
<keyword id="KW-0472">Membrane</keyword>
<keyword id="KW-0520">NAD</keyword>
<keyword id="KW-0521">NADP</keyword>
<keyword id="KW-0994">Organellar chromatophore</keyword>
<keyword id="KW-0934">Plastid</keyword>
<keyword id="KW-0618">Plastoquinone</keyword>
<keyword id="KW-0874">Quinone</keyword>
<keyword id="KW-0793">Thylakoid</keyword>
<keyword id="KW-1278">Translocase</keyword>
<keyword id="KW-0812">Transmembrane</keyword>
<keyword id="KW-1133">Transmembrane helix</keyword>
<evidence type="ECO:0000250" key="1"/>
<evidence type="ECO:0000255" key="2">
    <source>
        <dbReference type="HAMAP-Rule" id="MF_01355"/>
    </source>
</evidence>
<organism>
    <name type="scientific">Paulinella chromatophora</name>
    <dbReference type="NCBI Taxonomy" id="39717"/>
    <lineage>
        <taxon>Eukaryota</taxon>
        <taxon>Sar</taxon>
        <taxon>Rhizaria</taxon>
        <taxon>Cercozoa</taxon>
        <taxon>Imbricatea</taxon>
        <taxon>Silicofilosea</taxon>
        <taxon>Euglyphida</taxon>
        <taxon>Paulinellidae</taxon>
        <taxon>Paulinella</taxon>
    </lineage>
</organism>
<sequence>MSFFRYLSDISSETRTLLLAYGVLGGLYLILVPLALYWWMNRRWYIMGKIERLFVYGLVFLFFPGLILLSPFLNMRLKGQGET</sequence>
<accession>B1X3F0</accession>
<feature type="chain" id="PRO_0000353695" description="NAD(P)H-quinone oxidoreductase subunit L, organellar chromatophore">
    <location>
        <begin position="1"/>
        <end position="83"/>
    </location>
</feature>
<feature type="transmembrane region" description="Helical" evidence="2">
    <location>
        <begin position="17"/>
        <end position="37"/>
    </location>
</feature>
<feature type="transmembrane region" description="Helical" evidence="2">
    <location>
        <begin position="53"/>
        <end position="73"/>
    </location>
</feature>
<geneLocation type="organellar chromatophore"/>
<dbReference type="EC" id="7.1.1.-" evidence="2"/>
<dbReference type="EMBL" id="CP000815">
    <property type="protein sequence ID" value="ACB42469.1"/>
    <property type="molecule type" value="Genomic_DNA"/>
</dbReference>
<dbReference type="RefSeq" id="YP_002048679.1">
    <property type="nucleotide sequence ID" value="NC_011087.1"/>
</dbReference>
<dbReference type="SMR" id="B1X3F0"/>
<dbReference type="GeneID" id="6481625"/>
<dbReference type="GO" id="GO:0070118">
    <property type="term" value="C:organellar chromatophore thylakoid membrane"/>
    <property type="evidence" value="ECO:0007669"/>
    <property type="project" value="UniProtKB-SubCell"/>
</dbReference>
<dbReference type="GO" id="GO:0009536">
    <property type="term" value="C:plastid"/>
    <property type="evidence" value="ECO:0007669"/>
    <property type="project" value="UniProtKB-KW"/>
</dbReference>
<dbReference type="GO" id="GO:0016655">
    <property type="term" value="F:oxidoreductase activity, acting on NAD(P)H, quinone or similar compound as acceptor"/>
    <property type="evidence" value="ECO:0007669"/>
    <property type="project" value="UniProtKB-UniRule"/>
</dbReference>
<dbReference type="GO" id="GO:0048038">
    <property type="term" value="F:quinone binding"/>
    <property type="evidence" value="ECO:0007669"/>
    <property type="project" value="UniProtKB-KW"/>
</dbReference>
<dbReference type="HAMAP" id="MF_01355">
    <property type="entry name" value="NDH1_NDH1L"/>
    <property type="match status" value="1"/>
</dbReference>
<dbReference type="InterPro" id="IPR019654">
    <property type="entry name" value="NADH-quinone_OxRdatse_su_L"/>
</dbReference>
<dbReference type="PANTHER" id="PTHR36727">
    <property type="entry name" value="NAD(P)H-QUINONE OXIDOREDUCTASE SUBUNIT L, CHLOROPLASTIC"/>
    <property type="match status" value="1"/>
</dbReference>
<dbReference type="PANTHER" id="PTHR36727:SF2">
    <property type="entry name" value="NAD(P)H-QUINONE OXIDOREDUCTASE SUBUNIT L, CHLOROPLASTIC"/>
    <property type="match status" value="1"/>
</dbReference>
<dbReference type="Pfam" id="PF10716">
    <property type="entry name" value="NdhL"/>
    <property type="match status" value="1"/>
</dbReference>